<dbReference type="EMBL" id="AY485423">
    <property type="protein sequence ID" value="AAR98744.1"/>
    <property type="molecule type" value="mRNA"/>
</dbReference>
<dbReference type="STRING" id="9940.ENSOARP00000015786"/>
<dbReference type="PaxDb" id="9940-ENSOARP00000015786"/>
<dbReference type="eggNOG" id="KOG0160">
    <property type="taxonomic scope" value="Eukaryota"/>
</dbReference>
<dbReference type="eggNOG" id="KOG0165">
    <property type="taxonomic scope" value="Eukaryota"/>
</dbReference>
<dbReference type="Proteomes" id="UP000002356">
    <property type="component" value="Unplaced"/>
</dbReference>
<dbReference type="GO" id="GO:0005737">
    <property type="term" value="C:cytoplasm"/>
    <property type="evidence" value="ECO:0007669"/>
    <property type="project" value="UniProtKB-SubCell"/>
</dbReference>
<dbReference type="GO" id="GO:0005634">
    <property type="term" value="C:nucleus"/>
    <property type="evidence" value="ECO:0007669"/>
    <property type="project" value="UniProtKB-SubCell"/>
</dbReference>
<dbReference type="GO" id="GO:0000922">
    <property type="term" value="C:spindle pole"/>
    <property type="evidence" value="ECO:0007669"/>
    <property type="project" value="TreeGrafter"/>
</dbReference>
<dbReference type="GO" id="GO:0005516">
    <property type="term" value="F:calmodulin binding"/>
    <property type="evidence" value="ECO:0007669"/>
    <property type="project" value="UniProtKB-KW"/>
</dbReference>
<dbReference type="GO" id="GO:0051301">
    <property type="term" value="P:cell division"/>
    <property type="evidence" value="ECO:0007669"/>
    <property type="project" value="UniProtKB-KW"/>
</dbReference>
<dbReference type="GO" id="GO:0051295">
    <property type="term" value="P:establishment of meiotic spindle localization"/>
    <property type="evidence" value="ECO:0007669"/>
    <property type="project" value="TreeGrafter"/>
</dbReference>
<dbReference type="GO" id="GO:0000278">
    <property type="term" value="P:mitotic cell cycle"/>
    <property type="evidence" value="ECO:0007669"/>
    <property type="project" value="TreeGrafter"/>
</dbReference>
<dbReference type="GO" id="GO:0007051">
    <property type="term" value="P:spindle organization"/>
    <property type="evidence" value="ECO:0007669"/>
    <property type="project" value="TreeGrafter"/>
</dbReference>
<dbReference type="CDD" id="cd21223">
    <property type="entry name" value="CH_ASPM_rpt1"/>
    <property type="match status" value="1"/>
</dbReference>
<dbReference type="CDD" id="cd21224">
    <property type="entry name" value="CH_ASPM_rpt2"/>
    <property type="match status" value="1"/>
</dbReference>
<dbReference type="CDD" id="cd23767">
    <property type="entry name" value="IQCD"/>
    <property type="match status" value="1"/>
</dbReference>
<dbReference type="FunFam" id="1.10.418.10:FF:000051">
    <property type="entry name" value="Abnormal spindle-like microcephaly-associated protein homolog"/>
    <property type="match status" value="1"/>
</dbReference>
<dbReference type="FunFam" id="1.20.5.190:FF:000008">
    <property type="entry name" value="Abnormal spindle-like microcephaly-associated protein homolog"/>
    <property type="match status" value="6"/>
</dbReference>
<dbReference type="FunFam" id="1.20.5.190:FF:000009">
    <property type="entry name" value="Abnormal spindle-like microcephaly-associated protein homolog"/>
    <property type="match status" value="2"/>
</dbReference>
<dbReference type="FunFam" id="1.20.5.190:FF:000010">
    <property type="entry name" value="Abnormal spindle-like microcephaly-associated protein homolog"/>
    <property type="match status" value="2"/>
</dbReference>
<dbReference type="FunFam" id="1.20.5.190:FF:000016">
    <property type="entry name" value="Abnormal spindle-like microcephaly-associated protein homolog"/>
    <property type="match status" value="1"/>
</dbReference>
<dbReference type="FunFam" id="1.20.5.190:FF:000055">
    <property type="entry name" value="Putative microtubule-associated protein futsch"/>
    <property type="match status" value="1"/>
</dbReference>
<dbReference type="Gene3D" id="1.20.5.190">
    <property type="match status" value="31"/>
</dbReference>
<dbReference type="Gene3D" id="1.10.418.10">
    <property type="entry name" value="Calponin-like domain"/>
    <property type="match status" value="2"/>
</dbReference>
<dbReference type="Gene3D" id="1.25.10.10">
    <property type="entry name" value="Leucine-rich Repeat Variant"/>
    <property type="match status" value="1"/>
</dbReference>
<dbReference type="InterPro" id="IPR011989">
    <property type="entry name" value="ARM-like"/>
</dbReference>
<dbReference type="InterPro" id="IPR016024">
    <property type="entry name" value="ARM-type_fold"/>
</dbReference>
<dbReference type="InterPro" id="IPR031549">
    <property type="entry name" value="ASH"/>
</dbReference>
<dbReference type="InterPro" id="IPR051185">
    <property type="entry name" value="ASPM"/>
</dbReference>
<dbReference type="InterPro" id="IPR001715">
    <property type="entry name" value="CH_dom"/>
</dbReference>
<dbReference type="InterPro" id="IPR036872">
    <property type="entry name" value="CH_dom_sf"/>
</dbReference>
<dbReference type="InterPro" id="IPR000048">
    <property type="entry name" value="IQ_motif_EF-hand-BS"/>
</dbReference>
<dbReference type="InterPro" id="IPR027417">
    <property type="entry name" value="P-loop_NTPase"/>
</dbReference>
<dbReference type="PANTHER" id="PTHR22706">
    <property type="entry name" value="ASSEMBLY FACTOR FOR SPINDLE MICROTUBULES"/>
    <property type="match status" value="1"/>
</dbReference>
<dbReference type="PANTHER" id="PTHR22706:SF1">
    <property type="entry name" value="ASSEMBLY FACTOR FOR SPINDLE MICROTUBULES"/>
    <property type="match status" value="1"/>
</dbReference>
<dbReference type="Pfam" id="PF15780">
    <property type="entry name" value="ASH"/>
    <property type="match status" value="1"/>
</dbReference>
<dbReference type="Pfam" id="PF00307">
    <property type="entry name" value="CH"/>
    <property type="match status" value="1"/>
</dbReference>
<dbReference type="Pfam" id="PF00612">
    <property type="entry name" value="IQ"/>
    <property type="match status" value="41"/>
</dbReference>
<dbReference type="SMART" id="SM00033">
    <property type="entry name" value="CH"/>
    <property type="match status" value="1"/>
</dbReference>
<dbReference type="SMART" id="SM00015">
    <property type="entry name" value="IQ"/>
    <property type="match status" value="64"/>
</dbReference>
<dbReference type="SUPFAM" id="SSF48371">
    <property type="entry name" value="ARM repeat"/>
    <property type="match status" value="1"/>
</dbReference>
<dbReference type="SUPFAM" id="SSF47576">
    <property type="entry name" value="Calponin-homology domain, CH-domain"/>
    <property type="match status" value="1"/>
</dbReference>
<dbReference type="SUPFAM" id="SSF52540">
    <property type="entry name" value="P-loop containing nucleoside triphosphate hydrolases"/>
    <property type="match status" value="17"/>
</dbReference>
<dbReference type="PROSITE" id="PS50021">
    <property type="entry name" value="CH"/>
    <property type="match status" value="2"/>
</dbReference>
<dbReference type="PROSITE" id="PS50096">
    <property type="entry name" value="IQ"/>
    <property type="match status" value="41"/>
</dbReference>
<accession>P62297</accession>
<sequence>PNEEAAAVRLSRGPAAERGFTIWPXAFVLQPKEKIVVSITWTPLKGGRVRETVTFLVNDILKHQAILLGNAEEPKKKKRTLWDTINKKKVSASSRHNKKVSNIQNVNKTFNVSPKADKVRSPLQACENLATNGNCSPPESNPLILEENKLPISPISPAFQECHRETCLPLHVRRSTTYTSLPASENGELEKADGANTAKDFHFNEKGITETSFDSIDNVNSQTEENGKLTLTPNYSSSLNITQSQGHFLSPDSFVNNSHASNNEPEFVKCLSPDMFVKGNTRPVLLESKRVHEICRKILSPDSFINDNYGLNEDLETESVNPILSPNQFLKDNIAYICISQQTCQLPLSTRRFQDSQPPQDERKNAAVPCISECQQLESPKATFEASKALEVMSNSYTFKKQNQPKFSAVQDISSHSREKPIKRRPILSATVTKRKPTCAVXNQMETVKPKAKRCLNVVVGDCEKETDDQKEKDDFHPLLPTRDLILSRPKSSKNIVTPPCKAASVARKRKSKGHTGDENVRVRVTECSEVQEVKRTHFSPLASKTSTVKHTHKVLTSSLKRVSHREKVNLKRKTDSLGYRTPTSKTNKRTRPFVPVAQSNLTFIKALKAGIPRHPMPFAAKNIFYDERWKEKQEQGFTWWLNFILTPDDFTVKTNISEVNASTLLLGVESQHKISVPKAPTKDEVSLRAYTARCRLNRLRRAACRLFTSEKMVKAMKKLEIEIEARRLIVRKDRHLWKDVGERQKVLNWLLSYNPLWLRIGLETIYGELVPLEDNSDVTGLAMFILNRLLWNPDIAAEYRHPSVPHLYRDGHEEALSKFTLKKLLLLVCFLDYAKISRLIDHDPCLFCKDAEFKASXDILLAFSRDFLGGEGDLSRHLSLLGFPVTHVQMPFDEFDFAVKNLAVDLQCGVRLVRTMELLTQNWNLSKKLRIPAISRLQKMHNVDIVLEILKSRGIQLNDEHGNAILSKDIVDRHREKTLALLWKIALAFQVDISLNLDQLKEEIDFLKKTQSMKKTMSALLCRPDAVISKKRDERHSGPFEQYSESVKLLMDWVNAVCGFYNKKVENFTVSFSDGRVLCYLIHHYHPCYVPFDAICQRTTQTVECTHTGSVVLNSSSESDGSFLDLSXKSPDQENTSELYKELLENEKKNFQLVRSAARDLGGIPAMIHHSDMSNTIPDEKVVITYLSFLCARLLDLRKETRAARLIQTTWRQYKLKKDLKHHQERDKAARIIQSAIINFLTKQRFKKKVSAALVIQKYWRRALAKRKLLMLKKEKLERVHSKSASIIQRYWRRYSTRKQFLKLKYYSIILQSKIRMIIAVASYKRYHWATVTIQXHWRAHVRSKQDRQRYELLRSSTLVIQSAFRRWRRHKRQSQINAAITLQRAFREWRVQKRAQEERAAVVIQSWYRMHRESQKYIHLRSCVIIIQARFRCFQAQKLYTRTRESILTLQKHYRAYVKGKVERTGYLQKRAAAIRLQAAFRGRRARNLCKQIRAACVLQSCWRMRQDRLRFLNLKKNIIRLQAHIRRRQQLQTYQKMKKAALVIQIHFRAYISAKEVLASYQKTRSAVIVLQSACRRMQARKKFLHILTAVVKIQSYYRAYASRRKFLRLKKATVKLQSIVRMKQARKQYLHLRAIAQQREEHLRASCIKLQAFLRGYLVRKQVRLQRKAAVLLQSYFRMRKMRLEYLKVCQAAVVIQRYYRAHRAGAQQRKHFLQVRRAVTCLQAAYRGYKVRRQLQQQSAAALKIQAAFRGYRQRTKYQSMLQSALKIQRWYRTRKMVSALRSHFFKTRTAAISLQSAYRGWKVRKQMRKEHEAAVKIQSAFRTARAQKEFRLLKTAASVIQQHLRARATGLRQRTEYMALRRAAVTLQSAWRGRAARRRIQKQQRCAIIIQACYRRHVQWKRWEIMKKAARLIQMHYRAYRTGRKQHHLFLKTKGAAIILQSAFRGVRARKKVKEMHQAATTIQSRYRAYQARKKYASYRAAAVIIQRWYRAAKLAGCQREEYLAVKKAALKIQAVYRGVRERRQTRRMHMAATLIKAAFKMQQSRRRYQQMRTAAIVIQVRYRAYRQGRAQRAKYLTTLKAVALLQAALRGARVRQNLRRMRTAATLIQAHYRGRRQQAYFNKLKKVTKTVQQKYRAGRERHAQLRRYNQLRRSAICIQAAFRGMRARKRLKAMHSAAAVIQRRFRTLVMRRRFLSLRKTAVWVQRKYRAKVCARHHLQQLQLQKAAIKIQSWYRGWMVRKKTQEMRRAATVLQAAFRRHRARARYQAWRRASQVIQQRFRAGQAARLQRRQYLQQXRSALVLQAAFRGMRIRRRLKRMHASATLIQSRFRSVRVRKRFLSLKKAAVFVQRKYRATICAKHHLQRFLELKKAIIIIQAFYRRRMVKKQLQEMHRAAALIQASFRMHRARLAFQTWKLAXVLIQQHYRAYRAAKLQRALYIRWRHSAVVIQAAYKGLKARQLLREKHRAAVIIQSTYRMYRQHFSYQKLQWATKVIQERYRVSKRKALQHDALKAAACARADFQDMVIRGLIQERQHQAAITVQKHFRAFKTRKRYLHFRAKVVFVQRRYRVLMAVRTQAAICIQSCFRGFKARRGIQGMHLAATRIQSCYRRHRARADYQAKKRAVVVIQNHYRSYVRVKMERKEFLAIQKSARTIQAAFRGMKVRQKLKTMPDEKMAAPATRPAFYCHRTESQHEAGQSPALVAQGLYKTSLVGPSQETEHHSQRKAAVTIQKAFRKMVTRRLEKQRSAAVQIQSFLQMAVYRRRFLQQKRAALTLQRYFRTQQSRKRFLLYREAAVGLQNPHRAFLPAKHQRELYSQIRSSVIIIQARVKGFIQKRKFRKLKDSTIKIQAVWRRHKARKYLREVKAACRIQAWYRCRKARKEYLAVLRAVRIIQRCFCTQQQRRRFLNVRASAVIIQRRWRAVLSGRTTHEQSLMTKRHQAACLIQANFRGYKARQVFLQQKSAALTIQRFIRARKAGKHQRMKYVELKKSTVVLQALVRGWLVRKRISEQRAKIRLLHFAAAAFYHLSALRIQRAYRRHMALKNANNKQLNSAICIQRWFRARSQRKRFLQKYSIVNIQREAREQASQHSRAASVIQRAVRHFLLRKKQENLNKRIAKIQALWRGYSWRKKNDTSKTKAIRQRLQCVNREIREENKLYHRTVFALHHLLTYKYLSTVLEALKHLEAVTRLSSVCCEKMAQSGAISKVFVLIRSCNRSVPCMEVIRYAVQVLLNVAKYEKTTSAIYBVENCVDTLLELLQMYQEKSGDKVADKSRSIFTKTCCLLAVLLKTTTRASDVQSRSKVVDRIYSLYKLTAHKHKVNTERILCKQKKNSSVSLSFFPETPVRTRMVSRLKPDWVLRRDNV</sequence>
<comment type="function">
    <text evidence="1">Probable role in mitotic spindle regulation and coordination of mitotic processes. May have a preferential role in regulating neurogenesis (By similarity).</text>
</comment>
<comment type="subcellular location">
    <subcellularLocation>
        <location evidence="1">Cytoplasm</location>
    </subcellularLocation>
    <subcellularLocation>
        <location evidence="1">Cytoplasm</location>
        <location evidence="1">Cytoskeleton</location>
        <location evidence="1">Spindle</location>
    </subcellularLocation>
    <subcellularLocation>
        <location evidence="1">Nucleus</location>
    </subcellularLocation>
    <text evidence="1">The nuclear-cytoplasmic distribution could be regulated by the availability of calmodulin. Localizes to spindle poles during mitosis (By similarity).</text>
</comment>
<proteinExistence type="evidence at transcript level"/>
<keyword id="KW-0112">Calmodulin-binding</keyword>
<keyword id="KW-0131">Cell cycle</keyword>
<keyword id="KW-0132">Cell division</keyword>
<keyword id="KW-0175">Coiled coil</keyword>
<keyword id="KW-0963">Cytoplasm</keyword>
<keyword id="KW-0206">Cytoskeleton</keyword>
<keyword id="KW-0498">Mitosis</keyword>
<keyword id="KW-0539">Nucleus</keyword>
<keyword id="KW-0597">Phosphoprotein</keyword>
<keyword id="KW-1185">Reference proteome</keyword>
<keyword id="KW-0677">Repeat</keyword>
<reference key="1">
    <citation type="journal article" date="2004" name="Hum. Mol. Genet.">
        <title>Adaptive evolution of ASPM, a major determinant of cerebral cortical size in humans.</title>
        <authorList>
            <person name="Evans P.D."/>
            <person name="Anderson J.R."/>
            <person name="Vallender E.J."/>
            <person name="Gilbert S.L."/>
            <person name="Malcom C.M."/>
            <person name="Dorus S."/>
            <person name="Lahn B.T."/>
        </authorList>
    </citation>
    <scope>NUCLEOTIDE SEQUENCE [MRNA]</scope>
</reference>
<protein>
    <recommendedName>
        <fullName>Abnormal spindle-like microcephaly-associated protein homolog</fullName>
    </recommendedName>
</protein>
<evidence type="ECO:0000250" key="1"/>
<evidence type="ECO:0000250" key="2">
    <source>
        <dbReference type="UniProtKB" id="Q8IZT6"/>
    </source>
</evidence>
<evidence type="ECO:0000255" key="3"/>
<evidence type="ECO:0000255" key="4">
    <source>
        <dbReference type="PROSITE-ProRule" id="PRU00044"/>
    </source>
</evidence>
<evidence type="ECO:0000255" key="5">
    <source>
        <dbReference type="PROSITE-ProRule" id="PRU00116"/>
    </source>
</evidence>
<evidence type="ECO:0000256" key="6">
    <source>
        <dbReference type="SAM" id="MobiDB-lite"/>
    </source>
</evidence>
<name>ASPM_SHEEP</name>
<organism>
    <name type="scientific">Ovis aries</name>
    <name type="common">Sheep</name>
    <dbReference type="NCBI Taxonomy" id="9940"/>
    <lineage>
        <taxon>Eukaryota</taxon>
        <taxon>Metazoa</taxon>
        <taxon>Chordata</taxon>
        <taxon>Craniata</taxon>
        <taxon>Vertebrata</taxon>
        <taxon>Euteleostomi</taxon>
        <taxon>Mammalia</taxon>
        <taxon>Eutheria</taxon>
        <taxon>Laurasiatheria</taxon>
        <taxon>Artiodactyla</taxon>
        <taxon>Ruminantia</taxon>
        <taxon>Pecora</taxon>
        <taxon>Bovidae</taxon>
        <taxon>Caprinae</taxon>
        <taxon>Ovis</taxon>
    </lineage>
</organism>
<gene>
    <name type="primary">ASPM</name>
</gene>
<feature type="chain" id="PRO_0000191341" description="Abnormal spindle-like microcephaly-associated protein homolog">
    <location>
        <begin position="1" status="less than"/>
        <end position="3374" status="greater than"/>
    </location>
</feature>
<feature type="domain" description="Calponin-homology (CH) 1" evidence="4">
    <location>
        <begin position="855"/>
        <end position="991"/>
    </location>
</feature>
<feature type="domain" description="Calponin-homology (CH) 2" evidence="4">
    <location>
        <begin position="1045"/>
        <end position="1196"/>
    </location>
</feature>
<feature type="domain" description="IQ 1" evidence="5">
    <location>
        <begin position="1201"/>
        <end position="1230"/>
    </location>
</feature>
<feature type="domain" description="IQ 2" evidence="5">
    <location>
        <begin position="1282"/>
        <end position="1313"/>
    </location>
</feature>
<feature type="domain" description="IQ 3" evidence="5">
    <location>
        <begin position="1472"/>
        <end position="1503"/>
    </location>
</feature>
<feature type="domain" description="IQ 4" evidence="5">
    <location>
        <begin position="1567"/>
        <end position="1596"/>
    </location>
</feature>
<feature type="domain" description="IQ 5" evidence="5">
    <location>
        <begin position="1590"/>
        <end position="1619"/>
    </location>
</feature>
<feature type="domain" description="IQ 6" evidence="5">
    <location>
        <begin position="1613"/>
        <end position="1642"/>
    </location>
</feature>
<feature type="domain" description="IQ 7" evidence="5">
    <location>
        <begin position="1647"/>
        <end position="1678"/>
    </location>
</feature>
<feature type="domain" description="IQ 8" evidence="5">
    <location>
        <begin position="1720"/>
        <end position="1749"/>
    </location>
</feature>
<feature type="domain" description="IQ 9" evidence="5">
    <location>
        <begin position="1743"/>
        <end position="1772"/>
    </location>
</feature>
<feature type="domain" description="IQ 10" evidence="5">
    <location>
        <begin position="1793"/>
        <end position="1822"/>
    </location>
</feature>
<feature type="domain" description="IQ 11" evidence="5">
    <location>
        <begin position="1816"/>
        <end position="1847"/>
    </location>
</feature>
<feature type="domain" description="IQ 12" evidence="5">
    <location>
        <begin position="1866"/>
        <end position="1897"/>
    </location>
</feature>
<feature type="domain" description="IQ 13" evidence="5">
    <location>
        <begin position="1939"/>
        <end position="1968"/>
    </location>
</feature>
<feature type="domain" description="IQ 14" evidence="5">
    <location>
        <begin position="1962"/>
        <end position="1993"/>
    </location>
</feature>
<feature type="domain" description="IQ 15" evidence="5">
    <location>
        <begin position="2012"/>
        <end position="2043"/>
    </location>
</feature>
<feature type="domain" description="IQ 16" evidence="5">
    <location>
        <begin position="2035"/>
        <end position="2066"/>
    </location>
</feature>
<feature type="domain" description="IQ 17" evidence="5">
    <location>
        <begin position="2085"/>
        <end position="2116"/>
    </location>
</feature>
<feature type="domain" description="IQ 18" evidence="5">
    <location>
        <begin position="2108"/>
        <end position="2137"/>
    </location>
</feature>
<feature type="domain" description="IQ 19" evidence="5">
    <location>
        <begin position="2158"/>
        <end position="2189"/>
    </location>
</feature>
<feature type="domain" description="IQ 20" evidence="5">
    <location>
        <begin position="2181"/>
        <end position="2212"/>
    </location>
</feature>
<feature type="domain" description="IQ 21" evidence="5">
    <location>
        <begin position="2230"/>
        <end position="2261"/>
    </location>
</feature>
<feature type="domain" description="IQ 22" evidence="5">
    <location>
        <begin position="2253"/>
        <end position="2284"/>
    </location>
</feature>
<feature type="domain" description="IQ 23" evidence="5">
    <location>
        <begin position="2303"/>
        <end position="2334"/>
    </location>
</feature>
<feature type="domain" description="IQ 24" evidence="5">
    <location>
        <begin position="2326"/>
        <end position="2357"/>
    </location>
</feature>
<feature type="domain" description="IQ 25" evidence="5">
    <location>
        <begin position="2376"/>
        <end position="2407"/>
    </location>
</feature>
<feature type="domain" description="IQ 26" evidence="5">
    <location>
        <begin position="2399"/>
        <end position="2430"/>
    </location>
</feature>
<feature type="domain" description="IQ 27" evidence="5">
    <location>
        <begin position="2449"/>
        <end position="2480"/>
    </location>
</feature>
<feature type="domain" description="IQ 28" evidence="5">
    <location>
        <begin position="2472"/>
        <end position="2503"/>
    </location>
</feature>
<feature type="domain" description="IQ 29" evidence="5">
    <location>
        <begin position="2542"/>
        <end position="2573"/>
    </location>
</feature>
<feature type="domain" description="IQ 30" evidence="5">
    <location>
        <begin position="2583"/>
        <end position="2612"/>
    </location>
</feature>
<feature type="domain" description="IQ 31" evidence="5">
    <location>
        <begin position="2606"/>
        <end position="2637"/>
    </location>
</feature>
<feature type="domain" description="IQ 32" evidence="5">
    <location>
        <begin position="2656"/>
        <end position="2685"/>
    </location>
</feature>
<feature type="domain" description="IQ 33" evidence="5">
    <location>
        <begin position="2732"/>
        <end position="2763"/>
    </location>
</feature>
<feature type="domain" description="IQ 34" evidence="5">
    <location>
        <begin position="2777"/>
        <end position="2806"/>
    </location>
</feature>
<feature type="domain" description="IQ 35" evidence="5">
    <location>
        <begin position="2827"/>
        <end position="2856"/>
    </location>
</feature>
<feature type="domain" description="IQ 36" evidence="5">
    <location>
        <begin position="2850"/>
        <end position="2881"/>
    </location>
</feature>
<feature type="domain" description="IQ 37" evidence="5">
    <location>
        <begin position="2872"/>
        <end position="2903"/>
    </location>
</feature>
<feature type="domain" description="IQ 38" evidence="5">
    <location>
        <begin position="2947"/>
        <end position="2976"/>
    </location>
</feature>
<feature type="domain" description="IQ 39" evidence="5">
    <location>
        <begin position="2997"/>
        <end position="3028"/>
    </location>
</feature>
<feature type="domain" description="IQ 40" evidence="5">
    <location>
        <begin position="3099"/>
        <end position="3128"/>
    </location>
</feature>
<feature type="domain" description="IQ 41" evidence="5">
    <location>
        <begin position="3122"/>
        <end position="3153"/>
    </location>
</feature>
<feature type="region of interest" description="Disordered" evidence="6">
    <location>
        <begin position="492"/>
        <end position="518"/>
    </location>
</feature>
<feature type="coiled-coil region" evidence="3">
    <location>
        <begin position="992"/>
        <end position="1013"/>
    </location>
</feature>
<feature type="modified residue" description="Phosphoserine" evidence="2">
    <location>
        <position position="212"/>
    </location>
</feature>
<feature type="modified residue" description="Phosphoserine" evidence="2">
    <location>
        <position position="215"/>
    </location>
</feature>
<feature type="modified residue" description="Phosphoserine" evidence="2">
    <location>
        <position position="300"/>
    </location>
</feature>
<feature type="modified residue" description="Phosphoserine" evidence="2">
    <location>
        <position position="325"/>
    </location>
</feature>
<feature type="modified residue" description="Phosphoserine" evidence="2">
    <location>
        <position position="540"/>
    </location>
</feature>
<feature type="modified residue" description="Phosphoserine" evidence="2">
    <location>
        <position position="1038"/>
    </location>
</feature>
<feature type="non-terminal residue">
    <location>
        <position position="1"/>
    </location>
</feature>
<feature type="non-terminal residue">
    <location>
        <position position="3374"/>
    </location>
</feature>